<keyword id="KW-0067">ATP-binding</keyword>
<keyword id="KW-0414">Isoprene biosynthesis</keyword>
<keyword id="KW-0418">Kinase</keyword>
<keyword id="KW-0547">Nucleotide-binding</keyword>
<keyword id="KW-1185">Reference proteome</keyword>
<keyword id="KW-0808">Transferase</keyword>
<accession>A9HAC0</accession>
<accession>B5ZHI5</accession>
<organism>
    <name type="scientific">Gluconacetobacter diazotrophicus (strain ATCC 49037 / DSM 5601 / CCUG 37298 / CIP 103539 / LMG 7603 / PAl5)</name>
    <dbReference type="NCBI Taxonomy" id="272568"/>
    <lineage>
        <taxon>Bacteria</taxon>
        <taxon>Pseudomonadati</taxon>
        <taxon>Pseudomonadota</taxon>
        <taxon>Alphaproteobacteria</taxon>
        <taxon>Acetobacterales</taxon>
        <taxon>Acetobacteraceae</taxon>
        <taxon>Gluconacetobacter</taxon>
    </lineage>
</organism>
<protein>
    <recommendedName>
        <fullName evidence="1">4-diphosphocytidyl-2-C-methyl-D-erythritol kinase</fullName>
        <shortName evidence="1">CMK</shortName>
        <ecNumber evidence="1">2.7.1.148</ecNumber>
    </recommendedName>
    <alternativeName>
        <fullName evidence="1">4-(cytidine-5'-diphospho)-2-C-methyl-D-erythritol kinase</fullName>
    </alternativeName>
</protein>
<reference key="1">
    <citation type="journal article" date="2009" name="BMC Genomics">
        <title>Complete genome sequence of the sugarcane nitrogen-fixing endophyte Gluconacetobacter diazotrophicus Pal5.</title>
        <authorList>
            <person name="Bertalan M."/>
            <person name="Albano R."/>
            <person name="de Padua V."/>
            <person name="Rouws L."/>
            <person name="Rojas C."/>
            <person name="Hemerly A."/>
            <person name="Teixeira K."/>
            <person name="Schwab S."/>
            <person name="Araujo J."/>
            <person name="Oliveira A."/>
            <person name="Franca L."/>
            <person name="Magalhaes V."/>
            <person name="Alqueres S."/>
            <person name="Cardoso A."/>
            <person name="Almeida W."/>
            <person name="Loureiro M.M."/>
            <person name="Nogueira E."/>
            <person name="Cidade D."/>
            <person name="Oliveira D."/>
            <person name="Simao T."/>
            <person name="Macedo J."/>
            <person name="Valadao A."/>
            <person name="Dreschsel M."/>
            <person name="Freitas F."/>
            <person name="Vidal M."/>
            <person name="Guedes H."/>
            <person name="Rodrigues E."/>
            <person name="Meneses C."/>
            <person name="Brioso P."/>
            <person name="Pozzer L."/>
            <person name="Figueiredo D."/>
            <person name="Montano H."/>
            <person name="Junior J."/>
            <person name="de Souza Filho G."/>
            <person name="Martin Quintana Flores V."/>
            <person name="Ferreira B."/>
            <person name="Branco A."/>
            <person name="Gonzalez P."/>
            <person name="Guillobel H."/>
            <person name="Lemos M."/>
            <person name="Seibel L."/>
            <person name="Macedo J."/>
            <person name="Alves-Ferreira M."/>
            <person name="Sachetto-Martins G."/>
            <person name="Coelho A."/>
            <person name="Santos E."/>
            <person name="Amaral G."/>
            <person name="Neves A."/>
            <person name="Pacheco A.B."/>
            <person name="Carvalho D."/>
            <person name="Lery L."/>
            <person name="Bisch P."/>
            <person name="Rossle S.C."/>
            <person name="Urmenyi T."/>
            <person name="Rael Pereira A."/>
            <person name="Silva R."/>
            <person name="Rondinelli E."/>
            <person name="von Kruger W."/>
            <person name="Martins O."/>
            <person name="Baldani J.I."/>
            <person name="Ferreira P.C."/>
        </authorList>
    </citation>
    <scope>NUCLEOTIDE SEQUENCE [LARGE SCALE GENOMIC DNA]</scope>
    <source>
        <strain>ATCC 49037 / DSM 5601 / CCUG 37298 / CIP 103539 / LMG 7603 / PAl5</strain>
    </source>
</reference>
<reference key="2">
    <citation type="journal article" date="2010" name="Stand. Genomic Sci.">
        <title>Two genome sequences of the same bacterial strain, Gluconacetobacter diazotrophicus PAl 5, suggest a new standard in genome sequence submission.</title>
        <authorList>
            <person name="Giongo A."/>
            <person name="Tyler H.L."/>
            <person name="Zipperer U.N."/>
            <person name="Triplett E.W."/>
        </authorList>
    </citation>
    <scope>NUCLEOTIDE SEQUENCE [LARGE SCALE GENOMIC DNA]</scope>
    <source>
        <strain>ATCC 49037 / DSM 5601 / CCUG 37298 / CIP 103539 / LMG 7603 / PAl5</strain>
    </source>
</reference>
<comment type="function">
    <text evidence="1">Catalyzes the phosphorylation of the position 2 hydroxy group of 4-diphosphocytidyl-2C-methyl-D-erythritol.</text>
</comment>
<comment type="catalytic activity">
    <reaction evidence="1">
        <text>4-CDP-2-C-methyl-D-erythritol + ATP = 4-CDP-2-C-methyl-D-erythritol 2-phosphate + ADP + H(+)</text>
        <dbReference type="Rhea" id="RHEA:18437"/>
        <dbReference type="ChEBI" id="CHEBI:15378"/>
        <dbReference type="ChEBI" id="CHEBI:30616"/>
        <dbReference type="ChEBI" id="CHEBI:57823"/>
        <dbReference type="ChEBI" id="CHEBI:57919"/>
        <dbReference type="ChEBI" id="CHEBI:456216"/>
        <dbReference type="EC" id="2.7.1.148"/>
    </reaction>
</comment>
<comment type="pathway">
    <text evidence="1">Isoprenoid biosynthesis; isopentenyl diphosphate biosynthesis via DXP pathway; isopentenyl diphosphate from 1-deoxy-D-xylulose 5-phosphate: step 3/6.</text>
</comment>
<comment type="similarity">
    <text evidence="1">Belongs to the GHMP kinase family. IspE subfamily.</text>
</comment>
<proteinExistence type="inferred from homology"/>
<name>ISPE_GLUDA</name>
<gene>
    <name evidence="1" type="primary">ispE</name>
    <name type="ordered locus">GDI0728</name>
    <name type="ordered locus">Gdia_1283</name>
</gene>
<evidence type="ECO:0000255" key="1">
    <source>
        <dbReference type="HAMAP-Rule" id="MF_00061"/>
    </source>
</evidence>
<evidence type="ECO:0000305" key="2"/>
<sequence length="305" mass="31481">MTDPTGTGTLHESAHAKINLYLHVTGRRPDGYHLLDSLAVFAGAADRLTLRPGAAGQGEAVALDIAGAFGAGLVADTDSNLVLQAARRLRAEMGVTDRLAPMRIVLEKSLPVASGIGGGSADAAAALRLLLRAWPGEALPRARLMALAVELGADVPVCIDQRAARMGGVGERLAPAPALPNCGMMLVNCGEAVPTPAVFRARAPVFTPAASLPSAWPDVGAMVRDLAALTNDLQDAACELCPTIRTVLQVLDAAPGCRLARMSGSGATCFALFDSPQGARDAMTAVERPGWWVWAGGLHGMPAET</sequence>
<dbReference type="EC" id="2.7.1.148" evidence="1"/>
<dbReference type="EMBL" id="AM889285">
    <property type="protein sequence ID" value="CAP54671.1"/>
    <property type="molecule type" value="Genomic_DNA"/>
</dbReference>
<dbReference type="EMBL" id="CP001189">
    <property type="protein sequence ID" value="ACI51065.1"/>
    <property type="molecule type" value="Genomic_DNA"/>
</dbReference>
<dbReference type="RefSeq" id="WP_012223358.1">
    <property type="nucleotide sequence ID" value="NC_010125.1"/>
</dbReference>
<dbReference type="RefSeq" id="WP_012553689.1">
    <property type="nucleotide sequence ID" value="NC_011365.1"/>
</dbReference>
<dbReference type="SMR" id="A9HAC0"/>
<dbReference type="STRING" id="272568.GDI0728"/>
<dbReference type="KEGG" id="gdi:GDI0728"/>
<dbReference type="KEGG" id="gdj:Gdia_1283"/>
<dbReference type="eggNOG" id="COG1947">
    <property type="taxonomic scope" value="Bacteria"/>
</dbReference>
<dbReference type="HOGENOM" id="CLU_053057_1_0_5"/>
<dbReference type="OrthoDB" id="9809438at2"/>
<dbReference type="UniPathway" id="UPA00056">
    <property type="reaction ID" value="UER00094"/>
</dbReference>
<dbReference type="Proteomes" id="UP000001176">
    <property type="component" value="Chromosome"/>
</dbReference>
<dbReference type="GO" id="GO:0050515">
    <property type="term" value="F:4-(cytidine 5'-diphospho)-2-C-methyl-D-erythritol kinase activity"/>
    <property type="evidence" value="ECO:0007669"/>
    <property type="project" value="UniProtKB-UniRule"/>
</dbReference>
<dbReference type="GO" id="GO:0005524">
    <property type="term" value="F:ATP binding"/>
    <property type="evidence" value="ECO:0007669"/>
    <property type="project" value="UniProtKB-UniRule"/>
</dbReference>
<dbReference type="GO" id="GO:0019288">
    <property type="term" value="P:isopentenyl diphosphate biosynthetic process, methylerythritol 4-phosphate pathway"/>
    <property type="evidence" value="ECO:0007669"/>
    <property type="project" value="UniProtKB-UniRule"/>
</dbReference>
<dbReference type="GO" id="GO:0016114">
    <property type="term" value="P:terpenoid biosynthetic process"/>
    <property type="evidence" value="ECO:0007669"/>
    <property type="project" value="InterPro"/>
</dbReference>
<dbReference type="Gene3D" id="3.30.230.10">
    <property type="match status" value="1"/>
</dbReference>
<dbReference type="Gene3D" id="3.30.70.890">
    <property type="entry name" value="GHMP kinase, C-terminal domain"/>
    <property type="match status" value="1"/>
</dbReference>
<dbReference type="HAMAP" id="MF_00061">
    <property type="entry name" value="IspE"/>
    <property type="match status" value="1"/>
</dbReference>
<dbReference type="InterPro" id="IPR013750">
    <property type="entry name" value="GHMP_kinase_C_dom"/>
</dbReference>
<dbReference type="InterPro" id="IPR036554">
    <property type="entry name" value="GHMP_kinase_C_sf"/>
</dbReference>
<dbReference type="InterPro" id="IPR006204">
    <property type="entry name" value="GHMP_kinase_N_dom"/>
</dbReference>
<dbReference type="InterPro" id="IPR004424">
    <property type="entry name" value="IspE"/>
</dbReference>
<dbReference type="InterPro" id="IPR020568">
    <property type="entry name" value="Ribosomal_Su5_D2-typ_SF"/>
</dbReference>
<dbReference type="InterPro" id="IPR014721">
    <property type="entry name" value="Ribsml_uS5_D2-typ_fold_subgr"/>
</dbReference>
<dbReference type="NCBIfam" id="TIGR00154">
    <property type="entry name" value="ispE"/>
    <property type="match status" value="1"/>
</dbReference>
<dbReference type="NCBIfam" id="NF011202">
    <property type="entry name" value="PRK14608.1"/>
    <property type="match status" value="1"/>
</dbReference>
<dbReference type="PANTHER" id="PTHR43527">
    <property type="entry name" value="4-DIPHOSPHOCYTIDYL-2-C-METHYL-D-ERYTHRITOL KINASE, CHLOROPLASTIC"/>
    <property type="match status" value="1"/>
</dbReference>
<dbReference type="PANTHER" id="PTHR43527:SF2">
    <property type="entry name" value="4-DIPHOSPHOCYTIDYL-2-C-METHYL-D-ERYTHRITOL KINASE, CHLOROPLASTIC"/>
    <property type="match status" value="1"/>
</dbReference>
<dbReference type="Pfam" id="PF08544">
    <property type="entry name" value="GHMP_kinases_C"/>
    <property type="match status" value="1"/>
</dbReference>
<dbReference type="Pfam" id="PF00288">
    <property type="entry name" value="GHMP_kinases_N"/>
    <property type="match status" value="1"/>
</dbReference>
<dbReference type="PIRSF" id="PIRSF010376">
    <property type="entry name" value="IspE"/>
    <property type="match status" value="1"/>
</dbReference>
<dbReference type="SUPFAM" id="SSF55060">
    <property type="entry name" value="GHMP Kinase, C-terminal domain"/>
    <property type="match status" value="1"/>
</dbReference>
<dbReference type="SUPFAM" id="SSF54211">
    <property type="entry name" value="Ribosomal protein S5 domain 2-like"/>
    <property type="match status" value="1"/>
</dbReference>
<feature type="chain" id="PRO_0000335715" description="4-diphosphocytidyl-2-C-methyl-D-erythritol kinase">
    <location>
        <begin position="1"/>
        <end position="305"/>
    </location>
</feature>
<feature type="active site" evidence="1">
    <location>
        <position position="17"/>
    </location>
</feature>
<feature type="active site" evidence="1">
    <location>
        <position position="154"/>
    </location>
</feature>
<feature type="binding site" evidence="1">
    <location>
        <begin position="111"/>
        <end position="121"/>
    </location>
    <ligand>
        <name>ATP</name>
        <dbReference type="ChEBI" id="CHEBI:30616"/>
    </ligand>
</feature>
<feature type="sequence conflict" description="In Ref. 2; ACI51065." evidence="2" ref="2">
    <original>R</original>
    <variation>H</variation>
    <location>
        <position position="51"/>
    </location>
</feature>
<feature type="sequence conflict" description="In Ref. 2; ACI51065." evidence="2" ref="2">
    <original>A</original>
    <variation>V</variation>
    <location>
        <position position="62"/>
    </location>
</feature>
<feature type="sequence conflict" description="In Ref. 2; ACI51065." evidence="2" ref="2">
    <original>L</original>
    <variation>P</variation>
    <location>
        <position position="139"/>
    </location>
</feature>
<feature type="sequence conflict" description="In Ref. 2; ACI51065." evidence="2" ref="2">
    <original>A</original>
    <variation>P</variation>
    <location>
        <position position="163"/>
    </location>
</feature>
<feature type="sequence conflict" description="In Ref. 2; ACI51065." evidence="2" ref="2">
    <original>A</original>
    <variation>V</variation>
    <location>
        <position position="228"/>
    </location>
</feature>
<feature type="sequence conflict" description="In Ref. 2; ACI51065." evidence="2" ref="2">
    <original>G</original>
    <variation>A</variation>
    <location>
        <position position="278"/>
    </location>
</feature>